<proteinExistence type="inferred from homology"/>
<gene>
    <name evidence="1" type="primary">gatB</name>
    <name type="ordered locus">SPG_0399</name>
</gene>
<organism>
    <name type="scientific">Streptococcus pneumoniae serotype 19F (strain G54)</name>
    <dbReference type="NCBI Taxonomy" id="512566"/>
    <lineage>
        <taxon>Bacteria</taxon>
        <taxon>Bacillati</taxon>
        <taxon>Bacillota</taxon>
        <taxon>Bacilli</taxon>
        <taxon>Lactobacillales</taxon>
        <taxon>Streptococcaceae</taxon>
        <taxon>Streptococcus</taxon>
    </lineage>
</organism>
<keyword id="KW-0067">ATP-binding</keyword>
<keyword id="KW-0436">Ligase</keyword>
<keyword id="KW-0547">Nucleotide-binding</keyword>
<keyword id="KW-0648">Protein biosynthesis</keyword>
<name>GATB_STRP4</name>
<accession>B5E1P6</accession>
<evidence type="ECO:0000255" key="1">
    <source>
        <dbReference type="HAMAP-Rule" id="MF_00121"/>
    </source>
</evidence>
<protein>
    <recommendedName>
        <fullName evidence="1">Aspartyl/glutamyl-tRNA(Asn/Gln) amidotransferase subunit B</fullName>
        <shortName evidence="1">Asp/Glu-ADT subunit B</shortName>
        <ecNumber evidence="1">6.3.5.-</ecNumber>
    </recommendedName>
</protein>
<feature type="chain" id="PRO_1000095244" description="Aspartyl/glutamyl-tRNA(Asn/Gln) amidotransferase subunit B">
    <location>
        <begin position="1"/>
        <end position="480"/>
    </location>
</feature>
<reference key="1">
    <citation type="journal article" date="2001" name="Microb. Drug Resist.">
        <title>Annotated draft genomic sequence from a Streptococcus pneumoniae type 19F clinical isolate.</title>
        <authorList>
            <person name="Dopazo J."/>
            <person name="Mendoza A."/>
            <person name="Herrero J."/>
            <person name="Caldara F."/>
            <person name="Humbert Y."/>
            <person name="Friedli L."/>
            <person name="Guerrier M."/>
            <person name="Grand-Schenk E."/>
            <person name="Gandin C."/>
            <person name="de Francesco M."/>
            <person name="Polissi A."/>
            <person name="Buell G."/>
            <person name="Feger G."/>
            <person name="Garcia E."/>
            <person name="Peitsch M."/>
            <person name="Garcia-Bustos J.F."/>
        </authorList>
    </citation>
    <scope>NUCLEOTIDE SEQUENCE [LARGE SCALE GENOMIC DNA]</scope>
    <source>
        <strain>G54</strain>
    </source>
</reference>
<reference key="2">
    <citation type="submission" date="2008-03" db="EMBL/GenBank/DDBJ databases">
        <title>Pneumococcal beta glucoside metabolism investigated by whole genome comparison.</title>
        <authorList>
            <person name="Mulas L."/>
            <person name="Trappetti C."/>
            <person name="Hakenbeck R."/>
            <person name="Iannelli F."/>
            <person name="Pozzi G."/>
            <person name="Davidsen T.M."/>
            <person name="Tettelin H."/>
            <person name="Oggioni M."/>
        </authorList>
    </citation>
    <scope>NUCLEOTIDE SEQUENCE [LARGE SCALE GENOMIC DNA]</scope>
    <source>
        <strain>G54</strain>
    </source>
</reference>
<comment type="function">
    <text evidence="1">Allows the formation of correctly charged Asn-tRNA(Asn) or Gln-tRNA(Gln) through the transamidation of misacylated Asp-tRNA(Asn) or Glu-tRNA(Gln) in organisms which lack either or both of asparaginyl-tRNA or glutaminyl-tRNA synthetases. The reaction takes place in the presence of glutamine and ATP through an activated phospho-Asp-tRNA(Asn) or phospho-Glu-tRNA(Gln).</text>
</comment>
<comment type="catalytic activity">
    <reaction evidence="1">
        <text>L-glutamyl-tRNA(Gln) + L-glutamine + ATP + H2O = L-glutaminyl-tRNA(Gln) + L-glutamate + ADP + phosphate + H(+)</text>
        <dbReference type="Rhea" id="RHEA:17521"/>
        <dbReference type="Rhea" id="RHEA-COMP:9681"/>
        <dbReference type="Rhea" id="RHEA-COMP:9684"/>
        <dbReference type="ChEBI" id="CHEBI:15377"/>
        <dbReference type="ChEBI" id="CHEBI:15378"/>
        <dbReference type="ChEBI" id="CHEBI:29985"/>
        <dbReference type="ChEBI" id="CHEBI:30616"/>
        <dbReference type="ChEBI" id="CHEBI:43474"/>
        <dbReference type="ChEBI" id="CHEBI:58359"/>
        <dbReference type="ChEBI" id="CHEBI:78520"/>
        <dbReference type="ChEBI" id="CHEBI:78521"/>
        <dbReference type="ChEBI" id="CHEBI:456216"/>
    </reaction>
</comment>
<comment type="catalytic activity">
    <reaction evidence="1">
        <text>L-aspartyl-tRNA(Asn) + L-glutamine + ATP + H2O = L-asparaginyl-tRNA(Asn) + L-glutamate + ADP + phosphate + 2 H(+)</text>
        <dbReference type="Rhea" id="RHEA:14513"/>
        <dbReference type="Rhea" id="RHEA-COMP:9674"/>
        <dbReference type="Rhea" id="RHEA-COMP:9677"/>
        <dbReference type="ChEBI" id="CHEBI:15377"/>
        <dbReference type="ChEBI" id="CHEBI:15378"/>
        <dbReference type="ChEBI" id="CHEBI:29985"/>
        <dbReference type="ChEBI" id="CHEBI:30616"/>
        <dbReference type="ChEBI" id="CHEBI:43474"/>
        <dbReference type="ChEBI" id="CHEBI:58359"/>
        <dbReference type="ChEBI" id="CHEBI:78515"/>
        <dbReference type="ChEBI" id="CHEBI:78516"/>
        <dbReference type="ChEBI" id="CHEBI:456216"/>
    </reaction>
</comment>
<comment type="subunit">
    <text evidence="1">Heterotrimer of A, B and C subunits.</text>
</comment>
<comment type="similarity">
    <text evidence="1">Belongs to the GatB/GatE family. GatB subfamily.</text>
</comment>
<dbReference type="EC" id="6.3.5.-" evidence="1"/>
<dbReference type="EMBL" id="CP001015">
    <property type="protein sequence ID" value="ACF56666.1"/>
    <property type="molecule type" value="Genomic_DNA"/>
</dbReference>
<dbReference type="KEGG" id="spx:SPG_0399"/>
<dbReference type="HOGENOM" id="CLU_019240_0_0_9"/>
<dbReference type="GO" id="GO:0050566">
    <property type="term" value="F:asparaginyl-tRNA synthase (glutamine-hydrolyzing) activity"/>
    <property type="evidence" value="ECO:0007669"/>
    <property type="project" value="RHEA"/>
</dbReference>
<dbReference type="GO" id="GO:0005524">
    <property type="term" value="F:ATP binding"/>
    <property type="evidence" value="ECO:0007669"/>
    <property type="project" value="UniProtKB-KW"/>
</dbReference>
<dbReference type="GO" id="GO:0050567">
    <property type="term" value="F:glutaminyl-tRNA synthase (glutamine-hydrolyzing) activity"/>
    <property type="evidence" value="ECO:0007669"/>
    <property type="project" value="UniProtKB-UniRule"/>
</dbReference>
<dbReference type="GO" id="GO:0070681">
    <property type="term" value="P:glutaminyl-tRNAGln biosynthesis via transamidation"/>
    <property type="evidence" value="ECO:0007669"/>
    <property type="project" value="TreeGrafter"/>
</dbReference>
<dbReference type="GO" id="GO:0006412">
    <property type="term" value="P:translation"/>
    <property type="evidence" value="ECO:0007669"/>
    <property type="project" value="UniProtKB-UniRule"/>
</dbReference>
<dbReference type="FunFam" id="1.10.10.410:FF:000001">
    <property type="entry name" value="Aspartyl/glutamyl-tRNA(Asn/Gln) amidotransferase subunit B"/>
    <property type="match status" value="1"/>
</dbReference>
<dbReference type="FunFam" id="1.10.150.380:FF:000001">
    <property type="entry name" value="Aspartyl/glutamyl-tRNA(Asn/Gln) amidotransferase subunit B"/>
    <property type="match status" value="1"/>
</dbReference>
<dbReference type="Gene3D" id="1.10.10.410">
    <property type="match status" value="1"/>
</dbReference>
<dbReference type="Gene3D" id="1.10.150.380">
    <property type="entry name" value="GatB domain, N-terminal subdomain"/>
    <property type="match status" value="1"/>
</dbReference>
<dbReference type="HAMAP" id="MF_00121">
    <property type="entry name" value="GatB"/>
    <property type="match status" value="1"/>
</dbReference>
<dbReference type="InterPro" id="IPR017959">
    <property type="entry name" value="Asn/Gln-tRNA_amidoTrfase_suB/E"/>
</dbReference>
<dbReference type="InterPro" id="IPR006075">
    <property type="entry name" value="Asn/Gln-tRNA_Trfase_suB/E_cat"/>
</dbReference>
<dbReference type="InterPro" id="IPR018027">
    <property type="entry name" value="Asn/Gln_amidotransferase"/>
</dbReference>
<dbReference type="InterPro" id="IPR003789">
    <property type="entry name" value="Asn/Gln_tRNA_amidoTrase-B-like"/>
</dbReference>
<dbReference type="InterPro" id="IPR004413">
    <property type="entry name" value="GatB"/>
</dbReference>
<dbReference type="InterPro" id="IPR042114">
    <property type="entry name" value="GatB_C_1"/>
</dbReference>
<dbReference type="InterPro" id="IPR023168">
    <property type="entry name" value="GatB_Yqey_C_2"/>
</dbReference>
<dbReference type="InterPro" id="IPR017958">
    <property type="entry name" value="Gln-tRNA_amidoTrfase_suB_CS"/>
</dbReference>
<dbReference type="InterPro" id="IPR014746">
    <property type="entry name" value="Gln_synth/guanido_kin_cat_dom"/>
</dbReference>
<dbReference type="NCBIfam" id="TIGR00133">
    <property type="entry name" value="gatB"/>
    <property type="match status" value="1"/>
</dbReference>
<dbReference type="NCBIfam" id="NF004011">
    <property type="entry name" value="PRK05477.1-1"/>
    <property type="match status" value="1"/>
</dbReference>
<dbReference type="NCBIfam" id="NF004012">
    <property type="entry name" value="PRK05477.1-2"/>
    <property type="match status" value="1"/>
</dbReference>
<dbReference type="NCBIfam" id="NF004014">
    <property type="entry name" value="PRK05477.1-4"/>
    <property type="match status" value="1"/>
</dbReference>
<dbReference type="PANTHER" id="PTHR11659">
    <property type="entry name" value="GLUTAMYL-TRNA GLN AMIDOTRANSFERASE SUBUNIT B MITOCHONDRIAL AND PROKARYOTIC PET112-RELATED"/>
    <property type="match status" value="1"/>
</dbReference>
<dbReference type="PANTHER" id="PTHR11659:SF0">
    <property type="entry name" value="GLUTAMYL-TRNA(GLN) AMIDOTRANSFERASE SUBUNIT B, MITOCHONDRIAL"/>
    <property type="match status" value="1"/>
</dbReference>
<dbReference type="Pfam" id="PF02934">
    <property type="entry name" value="GatB_N"/>
    <property type="match status" value="1"/>
</dbReference>
<dbReference type="Pfam" id="PF02637">
    <property type="entry name" value="GatB_Yqey"/>
    <property type="match status" value="1"/>
</dbReference>
<dbReference type="SMART" id="SM00845">
    <property type="entry name" value="GatB_Yqey"/>
    <property type="match status" value="1"/>
</dbReference>
<dbReference type="SUPFAM" id="SSF89095">
    <property type="entry name" value="GatB/YqeY motif"/>
    <property type="match status" value="1"/>
</dbReference>
<dbReference type="SUPFAM" id="SSF55931">
    <property type="entry name" value="Glutamine synthetase/guanido kinase"/>
    <property type="match status" value="1"/>
</dbReference>
<dbReference type="PROSITE" id="PS01234">
    <property type="entry name" value="GATB"/>
    <property type="match status" value="1"/>
</dbReference>
<sequence length="480" mass="53767">MNFETVIGLEVHVELNTNSKIFSPTSAHFGNDQNANTNVIDWSFPGVLPVLNKGVVDAGIKAALALNMDIHKKMHFDRKNYFYPDNPKAYQISQFDEPIGYNGWIEVELEDGTTKKIGIERAHLEEDAGKNTHGTDGYSYVDLNRQGVPLIEIVSEADMRSPEEAYAYLTALKEVIQYAGISDVKMEEGSMRVDANISLRPYGQEKFGTKTELKNLNSFSNVRKGLEYEVQRQAEILRSGGQIRQETRRYDEANKATILMRVKEGAADYRYFPEPDXPLFEIXDEWIEEMRTELPEFPKERRARYVSDLGLSDYDASQLTANKVTSDFFEKAVALDGDAKQVSNWLQGEVAQFLNAEGKTLEQIELTPENLVEMIAIIEDGTISSKIAKKVFVHLAKNGGGAREYVEKAGMVQISDPAILIPIIHQVFADNEAAVVDFKSGKRNADKAFTGFLMKATKGQANPQVALKLLAQELAKLKEN</sequence>